<comment type="function">
    <text evidence="1">The glycine cleavage system catalyzes the degradation of glycine. The H protein shuttles the methylamine group of glycine from the P protein to the T protein.</text>
</comment>
<comment type="cofactor">
    <cofactor evidence="1">
        <name>(R)-lipoate</name>
        <dbReference type="ChEBI" id="CHEBI:83088"/>
    </cofactor>
    <text evidence="1">Binds 1 lipoyl cofactor covalently.</text>
</comment>
<comment type="subunit">
    <text evidence="1">The glycine cleavage system is composed of four proteins: P, T, L and H.</text>
</comment>
<comment type="similarity">
    <text evidence="1">Belongs to the GcvH family.</text>
</comment>
<sequence length="126" mass="13809">MKTPAELKYSKDHEWARQEGDVVFIGITDYAQGELGEIVYVDVTTEGETLEADEVFGSIEAVKTVSDLMMPIAGEVLEVNPDLEEQPELVNSDPYGAGWIIKVKAANAADFDNLLSAAEYEKLIAQ</sequence>
<feature type="chain" id="PRO_1000114537" description="Glycine cleavage system H protein">
    <location>
        <begin position="1"/>
        <end position="126"/>
    </location>
</feature>
<feature type="domain" description="Lipoyl-binding" evidence="2">
    <location>
        <begin position="22"/>
        <end position="104"/>
    </location>
</feature>
<feature type="modified residue" description="N6-lipoyllysine" evidence="1">
    <location>
        <position position="63"/>
    </location>
</feature>
<name>GCSH_PORG3</name>
<gene>
    <name evidence="1" type="primary">gcvH</name>
    <name type="ordered locus">PGN_1000</name>
</gene>
<accession>B2RJH4</accession>
<dbReference type="EMBL" id="AP009380">
    <property type="protein sequence ID" value="BAG33519.1"/>
    <property type="molecule type" value="Genomic_DNA"/>
</dbReference>
<dbReference type="RefSeq" id="WP_004584176.1">
    <property type="nucleotide sequence ID" value="NZ_CP025930.1"/>
</dbReference>
<dbReference type="SMR" id="B2RJH4"/>
<dbReference type="GeneID" id="29256211"/>
<dbReference type="KEGG" id="pgn:PGN_1000"/>
<dbReference type="eggNOG" id="COG0509">
    <property type="taxonomic scope" value="Bacteria"/>
</dbReference>
<dbReference type="HOGENOM" id="CLU_097408_2_2_10"/>
<dbReference type="OrthoDB" id="9796712at2"/>
<dbReference type="BioCyc" id="PGIN431947:G1G2V-1126-MONOMER"/>
<dbReference type="Proteomes" id="UP000008842">
    <property type="component" value="Chromosome"/>
</dbReference>
<dbReference type="GO" id="GO:0005829">
    <property type="term" value="C:cytosol"/>
    <property type="evidence" value="ECO:0007669"/>
    <property type="project" value="TreeGrafter"/>
</dbReference>
<dbReference type="GO" id="GO:0005960">
    <property type="term" value="C:glycine cleavage complex"/>
    <property type="evidence" value="ECO:0007669"/>
    <property type="project" value="InterPro"/>
</dbReference>
<dbReference type="GO" id="GO:0019464">
    <property type="term" value="P:glycine decarboxylation via glycine cleavage system"/>
    <property type="evidence" value="ECO:0007669"/>
    <property type="project" value="UniProtKB-UniRule"/>
</dbReference>
<dbReference type="CDD" id="cd06848">
    <property type="entry name" value="GCS_H"/>
    <property type="match status" value="1"/>
</dbReference>
<dbReference type="Gene3D" id="2.40.50.100">
    <property type="match status" value="1"/>
</dbReference>
<dbReference type="HAMAP" id="MF_00272">
    <property type="entry name" value="GcvH"/>
    <property type="match status" value="1"/>
</dbReference>
<dbReference type="InterPro" id="IPR003016">
    <property type="entry name" value="2-oxoA_DH_lipoyl-BS"/>
</dbReference>
<dbReference type="InterPro" id="IPR000089">
    <property type="entry name" value="Biotin_lipoyl"/>
</dbReference>
<dbReference type="InterPro" id="IPR002930">
    <property type="entry name" value="GCV_H"/>
</dbReference>
<dbReference type="InterPro" id="IPR033753">
    <property type="entry name" value="GCV_H/Fam206"/>
</dbReference>
<dbReference type="InterPro" id="IPR017453">
    <property type="entry name" value="GCV_H_sub"/>
</dbReference>
<dbReference type="InterPro" id="IPR011053">
    <property type="entry name" value="Single_hybrid_motif"/>
</dbReference>
<dbReference type="NCBIfam" id="TIGR00527">
    <property type="entry name" value="gcvH"/>
    <property type="match status" value="1"/>
</dbReference>
<dbReference type="NCBIfam" id="NF002270">
    <property type="entry name" value="PRK01202.1"/>
    <property type="match status" value="1"/>
</dbReference>
<dbReference type="PANTHER" id="PTHR11715">
    <property type="entry name" value="GLYCINE CLEAVAGE SYSTEM H PROTEIN"/>
    <property type="match status" value="1"/>
</dbReference>
<dbReference type="PANTHER" id="PTHR11715:SF3">
    <property type="entry name" value="GLYCINE CLEAVAGE SYSTEM H PROTEIN-RELATED"/>
    <property type="match status" value="1"/>
</dbReference>
<dbReference type="Pfam" id="PF01597">
    <property type="entry name" value="GCV_H"/>
    <property type="match status" value="1"/>
</dbReference>
<dbReference type="SUPFAM" id="SSF51230">
    <property type="entry name" value="Single hybrid motif"/>
    <property type="match status" value="1"/>
</dbReference>
<dbReference type="PROSITE" id="PS50968">
    <property type="entry name" value="BIOTINYL_LIPOYL"/>
    <property type="match status" value="1"/>
</dbReference>
<dbReference type="PROSITE" id="PS00189">
    <property type="entry name" value="LIPOYL"/>
    <property type="match status" value="1"/>
</dbReference>
<reference key="1">
    <citation type="journal article" date="2008" name="DNA Res.">
        <title>Determination of the genome sequence of Porphyromonas gingivalis strain ATCC 33277 and genomic comparison with strain W83 revealed extensive genome rearrangements in P. gingivalis.</title>
        <authorList>
            <person name="Naito M."/>
            <person name="Hirakawa H."/>
            <person name="Yamashita A."/>
            <person name="Ohara N."/>
            <person name="Shoji M."/>
            <person name="Yukitake H."/>
            <person name="Nakayama K."/>
            <person name="Toh H."/>
            <person name="Yoshimura F."/>
            <person name="Kuhara S."/>
            <person name="Hattori M."/>
            <person name="Hayashi T."/>
            <person name="Nakayama K."/>
        </authorList>
    </citation>
    <scope>NUCLEOTIDE SEQUENCE [LARGE SCALE GENOMIC DNA]</scope>
    <source>
        <strain>ATCC 33277 / DSM 20709 / CIP 103683 / JCM 12257 / NCTC 11834 / 2561</strain>
    </source>
</reference>
<keyword id="KW-0450">Lipoyl</keyword>
<evidence type="ECO:0000255" key="1">
    <source>
        <dbReference type="HAMAP-Rule" id="MF_00272"/>
    </source>
</evidence>
<evidence type="ECO:0000255" key="2">
    <source>
        <dbReference type="PROSITE-ProRule" id="PRU01066"/>
    </source>
</evidence>
<proteinExistence type="inferred from homology"/>
<protein>
    <recommendedName>
        <fullName evidence="1">Glycine cleavage system H protein</fullName>
    </recommendedName>
</protein>
<organism>
    <name type="scientific">Porphyromonas gingivalis (strain ATCC 33277 / DSM 20709 / CIP 103683 / JCM 12257 / NCTC 11834 / 2561)</name>
    <dbReference type="NCBI Taxonomy" id="431947"/>
    <lineage>
        <taxon>Bacteria</taxon>
        <taxon>Pseudomonadati</taxon>
        <taxon>Bacteroidota</taxon>
        <taxon>Bacteroidia</taxon>
        <taxon>Bacteroidales</taxon>
        <taxon>Porphyromonadaceae</taxon>
        <taxon>Porphyromonas</taxon>
    </lineage>
</organism>